<evidence type="ECO:0000255" key="1">
    <source>
        <dbReference type="HAMAP-Rule" id="MF_00055"/>
    </source>
</evidence>
<feature type="chain" id="PRO_1000003323" description="MEMO1 family protein Pars_0062">
    <location>
        <begin position="1"/>
        <end position="281"/>
    </location>
</feature>
<dbReference type="EMBL" id="CP000660">
    <property type="protein sequence ID" value="ABP49679.1"/>
    <property type="molecule type" value="Genomic_DNA"/>
</dbReference>
<dbReference type="RefSeq" id="WP_011899587.1">
    <property type="nucleotide sequence ID" value="NC_009376.1"/>
</dbReference>
<dbReference type="SMR" id="A4WH12"/>
<dbReference type="STRING" id="340102.Pars_0062"/>
<dbReference type="GeneID" id="5054922"/>
<dbReference type="KEGG" id="pas:Pars_0062"/>
<dbReference type="HOGENOM" id="CLU_038085_2_0_2"/>
<dbReference type="OrthoDB" id="372162at2157"/>
<dbReference type="PhylomeDB" id="A4WH12"/>
<dbReference type="Proteomes" id="UP000001567">
    <property type="component" value="Chromosome"/>
</dbReference>
<dbReference type="CDD" id="cd07361">
    <property type="entry name" value="MEMO_like"/>
    <property type="match status" value="1"/>
</dbReference>
<dbReference type="Gene3D" id="3.40.830.10">
    <property type="entry name" value="LigB-like"/>
    <property type="match status" value="1"/>
</dbReference>
<dbReference type="HAMAP" id="MF_00055">
    <property type="entry name" value="MEMO1"/>
    <property type="match status" value="1"/>
</dbReference>
<dbReference type="InterPro" id="IPR002737">
    <property type="entry name" value="MEMO1_fam"/>
</dbReference>
<dbReference type="NCBIfam" id="TIGR04336">
    <property type="entry name" value="AmmeMemoSam_B"/>
    <property type="match status" value="1"/>
</dbReference>
<dbReference type="PANTHER" id="PTHR11060">
    <property type="entry name" value="PROTEIN MEMO1"/>
    <property type="match status" value="1"/>
</dbReference>
<dbReference type="PANTHER" id="PTHR11060:SF0">
    <property type="entry name" value="PROTEIN MEMO1"/>
    <property type="match status" value="1"/>
</dbReference>
<dbReference type="Pfam" id="PF01875">
    <property type="entry name" value="Memo"/>
    <property type="match status" value="1"/>
</dbReference>
<dbReference type="SUPFAM" id="SSF53213">
    <property type="entry name" value="LigB-like"/>
    <property type="match status" value="1"/>
</dbReference>
<name>Y062_PYRAR</name>
<accession>A4WH12</accession>
<sequence>MRVRKPAVAGYFYPAEKEKLIQQIDWSIKHELGPKALQMPKLGEKALGGVVPHAGYIYSGPVAAWLYSALAGYGKPDAIIIIGPNHYGIGAPVAVMKSGVWETPLGRVEVDGDLAELIMRHYKGVEDDFYAFSKEHSVEVQIPFIQYYFGDVRIVPIVVWRQTLSTSRELGKAVATAIREYGRYVYVLASSDFNHYEPHEVTVQKDDMAISKILKVDEAGLFEVASKFDISICGLGPIGALIVIAKELGFGNVTLLKHATSGDTSGYKDETVGYASILFHR</sequence>
<organism>
    <name type="scientific">Pyrobaculum arsenaticum (strain DSM 13514 / JCM 11321 / PZ6)</name>
    <dbReference type="NCBI Taxonomy" id="340102"/>
    <lineage>
        <taxon>Archaea</taxon>
        <taxon>Thermoproteota</taxon>
        <taxon>Thermoprotei</taxon>
        <taxon>Thermoproteales</taxon>
        <taxon>Thermoproteaceae</taxon>
        <taxon>Pyrobaculum</taxon>
    </lineage>
</organism>
<gene>
    <name type="ordered locus">Pars_0062</name>
</gene>
<protein>
    <recommendedName>
        <fullName evidence="1">MEMO1 family protein Pars_0062</fullName>
    </recommendedName>
</protein>
<comment type="similarity">
    <text evidence="1">Belongs to the MEMO1 family.</text>
</comment>
<reference key="1">
    <citation type="submission" date="2007-04" db="EMBL/GenBank/DDBJ databases">
        <title>Complete sequence of Pyrobaculum arsenaticum DSM 13514.</title>
        <authorList>
            <consortium name="US DOE Joint Genome Institute"/>
            <person name="Copeland A."/>
            <person name="Lucas S."/>
            <person name="Lapidus A."/>
            <person name="Barry K."/>
            <person name="Glavina del Rio T."/>
            <person name="Dalin E."/>
            <person name="Tice H."/>
            <person name="Pitluck S."/>
            <person name="Chain P."/>
            <person name="Malfatti S."/>
            <person name="Shin M."/>
            <person name="Vergez L."/>
            <person name="Schmutz J."/>
            <person name="Larimer F."/>
            <person name="Land M."/>
            <person name="Hauser L."/>
            <person name="Kyrpides N."/>
            <person name="Mikhailova N."/>
            <person name="Cozen A.E."/>
            <person name="Fitz-Gibbon S.T."/>
            <person name="House C.H."/>
            <person name="Saltikov C."/>
            <person name="Lowe T.M."/>
            <person name="Richardson P."/>
        </authorList>
    </citation>
    <scope>NUCLEOTIDE SEQUENCE [LARGE SCALE GENOMIC DNA]</scope>
    <source>
        <strain>ATCC 700994 / DSM 13514 / JCM 11321 / PZ6</strain>
    </source>
</reference>
<proteinExistence type="inferred from homology"/>